<accession>Q5R644</accession>
<evidence type="ECO:0000250" key="1"/>
<evidence type="ECO:0000250" key="2">
    <source>
        <dbReference type="UniProtKB" id="O35841"/>
    </source>
</evidence>
<evidence type="ECO:0000250" key="3">
    <source>
        <dbReference type="UniProtKB" id="Q9BZZ5"/>
    </source>
</evidence>
<evidence type="ECO:0000256" key="4">
    <source>
        <dbReference type="SAM" id="MobiDB-lite"/>
    </source>
</evidence>
<evidence type="ECO:0000305" key="5"/>
<keyword id="KW-0007">Acetylation</keyword>
<keyword id="KW-0053">Apoptosis</keyword>
<keyword id="KW-0963">Cytoplasm</keyword>
<keyword id="KW-0539">Nucleus</keyword>
<keyword id="KW-0597">Phosphoprotein</keyword>
<keyword id="KW-1185">Reference proteome</keyword>
<keyword id="KW-0677">Repeat</keyword>
<gene>
    <name type="primary">API5</name>
</gene>
<name>API5_PONAB</name>
<sequence length="504" mass="56770">MPTVEELYRNYGILADATEQVGQHKDAYQVILDGVKGGTKEKRLAAQFIPKFFKHFPELADSAINAQLDLCEDEDVSIRRQAIKELPQFATGENLPRVADILTQLLQTDDSAEFNLVNNALLSIFKMDAKGTLGGLFSQILQGEDIVRERAIKFLSTKLKTLPDEVLTKEVEELILTESKKVLEDVTGEEFVLFMKILSGLKSLQTVSGRQQLVELVAEQADLEQTFNPSDPDCVDRLLQCTRQAVPLFSKNVHSTRFVTYFCEQVLPNLGTLTTPVEGLDIQLEVLKLLAEMSSFCGDMEKLETNLRKLFDKLLEYMPLPPEEAENGENAGNEEPKLQFSYVECLLYSFHQLGRKLPDFLTAKLNAEKLKDFKIRLQYFARGLQVYIRQLRLALQGKTGEALKTEENKIKVVALKITNNINVLIKDLFHIPPSYKSTVTLSWKPVQKVEIGQKRASEDTTSGSPPKKSSAGPKRDARQIYNPPSGKYSSNLGNFNYERSLQGK</sequence>
<proteinExistence type="evidence at transcript level"/>
<dbReference type="EMBL" id="CR860652">
    <property type="protein sequence ID" value="CAH92772.1"/>
    <property type="molecule type" value="mRNA"/>
</dbReference>
<dbReference type="RefSeq" id="NP_001126616.1">
    <property type="nucleotide sequence ID" value="NM_001133144.1"/>
</dbReference>
<dbReference type="SMR" id="Q5R644"/>
<dbReference type="FunCoup" id="Q5R644">
    <property type="interactions" value="5451"/>
</dbReference>
<dbReference type="STRING" id="9601.ENSPPYP00000003839"/>
<dbReference type="GeneID" id="100173613"/>
<dbReference type="KEGG" id="pon:100173613"/>
<dbReference type="CTD" id="8539"/>
<dbReference type="eggNOG" id="KOG2213">
    <property type="taxonomic scope" value="Eukaryota"/>
</dbReference>
<dbReference type="InParanoid" id="Q5R644"/>
<dbReference type="OrthoDB" id="19224at2759"/>
<dbReference type="Proteomes" id="UP000001595">
    <property type="component" value="Unplaced"/>
</dbReference>
<dbReference type="GO" id="GO:0005737">
    <property type="term" value="C:cytoplasm"/>
    <property type="evidence" value="ECO:0007669"/>
    <property type="project" value="UniProtKB-SubCell"/>
</dbReference>
<dbReference type="GO" id="GO:0005634">
    <property type="term" value="C:nucleus"/>
    <property type="evidence" value="ECO:0007669"/>
    <property type="project" value="UniProtKB-SubCell"/>
</dbReference>
<dbReference type="GO" id="GO:0017134">
    <property type="term" value="F:fibroblast growth factor binding"/>
    <property type="evidence" value="ECO:0000250"/>
    <property type="project" value="UniProtKB"/>
</dbReference>
<dbReference type="GO" id="GO:0003723">
    <property type="term" value="F:RNA binding"/>
    <property type="evidence" value="ECO:0007669"/>
    <property type="project" value="TreeGrafter"/>
</dbReference>
<dbReference type="GO" id="GO:0006915">
    <property type="term" value="P:apoptotic process"/>
    <property type="evidence" value="ECO:0007669"/>
    <property type="project" value="UniProtKB-KW"/>
</dbReference>
<dbReference type="GO" id="GO:0043066">
    <property type="term" value="P:negative regulation of apoptotic process"/>
    <property type="evidence" value="ECO:0000250"/>
    <property type="project" value="UniProtKB"/>
</dbReference>
<dbReference type="FunFam" id="1.25.10.10:FF:000092">
    <property type="entry name" value="apoptosis inhibitor 5 isoform X2"/>
    <property type="match status" value="1"/>
</dbReference>
<dbReference type="Gene3D" id="1.25.10.10">
    <property type="entry name" value="Leucine-rich Repeat Variant"/>
    <property type="match status" value="1"/>
</dbReference>
<dbReference type="InterPro" id="IPR008383">
    <property type="entry name" value="API5"/>
</dbReference>
<dbReference type="InterPro" id="IPR011989">
    <property type="entry name" value="ARM-like"/>
</dbReference>
<dbReference type="InterPro" id="IPR016024">
    <property type="entry name" value="ARM-type_fold"/>
</dbReference>
<dbReference type="PANTHER" id="PTHR12758:SF19">
    <property type="entry name" value="APOPTOSIS INHIBITOR 5"/>
    <property type="match status" value="1"/>
</dbReference>
<dbReference type="PANTHER" id="PTHR12758">
    <property type="entry name" value="APOPTOSIS INHIBITOR 5-RELATED"/>
    <property type="match status" value="1"/>
</dbReference>
<dbReference type="Pfam" id="PF05918">
    <property type="entry name" value="API5"/>
    <property type="match status" value="1"/>
</dbReference>
<dbReference type="SUPFAM" id="SSF48371">
    <property type="entry name" value="ARM repeat"/>
    <property type="match status" value="1"/>
</dbReference>
<organism>
    <name type="scientific">Pongo abelii</name>
    <name type="common">Sumatran orangutan</name>
    <name type="synonym">Pongo pygmaeus abelii</name>
    <dbReference type="NCBI Taxonomy" id="9601"/>
    <lineage>
        <taxon>Eukaryota</taxon>
        <taxon>Metazoa</taxon>
        <taxon>Chordata</taxon>
        <taxon>Craniata</taxon>
        <taxon>Vertebrata</taxon>
        <taxon>Euteleostomi</taxon>
        <taxon>Mammalia</taxon>
        <taxon>Eutheria</taxon>
        <taxon>Euarchontoglires</taxon>
        <taxon>Primates</taxon>
        <taxon>Haplorrhini</taxon>
        <taxon>Catarrhini</taxon>
        <taxon>Hominidae</taxon>
        <taxon>Pongo</taxon>
    </lineage>
</organism>
<comment type="function">
    <text evidence="1">Antiapoptotic factor that may have a role in protein assembly. Negatively regulates ACIN1. By binding to ACIN1, it suppresses ACIN1 cleavage from CASP3 and ACIN1-mediated DNA fragmentation. Also known to efficiently suppress E2F1-induced apoptosis (By similarity).</text>
</comment>
<comment type="subunit">
    <text evidence="1">Monomer. Interacts with FGF2 and ACIN1 (By similarity).</text>
</comment>
<comment type="subcellular location">
    <subcellularLocation>
        <location evidence="1">Nucleus</location>
    </subcellularLocation>
    <subcellularLocation>
        <location evidence="1">Cytoplasm</location>
    </subcellularLocation>
    <text>Mainly nuclear.</text>
</comment>
<comment type="PTM">
    <text evidence="1">Acetylation at Lys-251 impairs antiapoptotic function.</text>
</comment>
<comment type="similarity">
    <text evidence="5">Belongs to the API5 family.</text>
</comment>
<feature type="chain" id="PRO_0000064636" description="Apoptosis inhibitor 5">
    <location>
        <begin position="1"/>
        <end position="504"/>
    </location>
</feature>
<feature type="region of interest" description="ARM-like and Heat-like helical repeats" evidence="1">
    <location>
        <begin position="1"/>
        <end position="360"/>
    </location>
</feature>
<feature type="region of interest" description="Leucine-zipper">
    <location>
        <begin position="370"/>
        <end position="391"/>
    </location>
</feature>
<feature type="region of interest" description="Disordered" evidence="4">
    <location>
        <begin position="452"/>
        <end position="504"/>
    </location>
</feature>
<feature type="short sequence motif" description="Nuclear localization signal" evidence="1">
    <location>
        <begin position="454"/>
        <end position="475"/>
    </location>
</feature>
<feature type="compositionally biased region" description="Low complexity" evidence="4">
    <location>
        <begin position="462"/>
        <end position="472"/>
    </location>
</feature>
<feature type="compositionally biased region" description="Polar residues" evidence="4">
    <location>
        <begin position="487"/>
        <end position="504"/>
    </location>
</feature>
<feature type="modified residue" description="N6-acetyllysine" evidence="3">
    <location>
        <position position="251"/>
    </location>
</feature>
<feature type="modified residue" description="Phosphothreonine" evidence="3">
    <location>
        <position position="399"/>
    </location>
</feature>
<feature type="modified residue" description="Phosphoserine" evidence="3">
    <location>
        <position position="462"/>
    </location>
</feature>
<feature type="modified residue" description="Phosphoserine" evidence="3">
    <location>
        <position position="464"/>
    </location>
</feature>
<feature type="modified residue" description="Phosphoserine" evidence="2">
    <location>
        <position position="469"/>
    </location>
</feature>
<protein>
    <recommendedName>
        <fullName>Apoptosis inhibitor 5</fullName>
        <shortName>API-5</shortName>
    </recommendedName>
</protein>
<reference key="1">
    <citation type="submission" date="2004-11" db="EMBL/GenBank/DDBJ databases">
        <authorList>
            <consortium name="The German cDNA consortium"/>
        </authorList>
    </citation>
    <scope>NUCLEOTIDE SEQUENCE [LARGE SCALE MRNA]</scope>
    <source>
        <tissue>Brain cortex</tissue>
    </source>
</reference>